<keyword id="KW-0378">Hydrolase</keyword>
<keyword id="KW-0574">Periplasm</keyword>
<keyword id="KW-1185">Reference proteome</keyword>
<keyword id="KW-0732">Signal</keyword>
<feature type="signal peptide" evidence="1">
    <location>
        <begin position="1"/>
        <end position="35"/>
    </location>
</feature>
<feature type="chain" id="PRO_0000380575" description="Lipopolysaccharide core heptose(II)-phosphate phosphatase">
    <location>
        <begin position="36"/>
        <end position="201"/>
    </location>
</feature>
<comment type="function">
    <text evidence="1">Catalyzes the dephosphorylation of heptose(II) of the outer membrane lipopolysaccharide core.</text>
</comment>
<comment type="pathway">
    <text evidence="1">Bacterial outer membrane biogenesis; lipopolysaccharide metabolism.</text>
</comment>
<comment type="subcellular location">
    <subcellularLocation>
        <location evidence="1">Periplasm</location>
    </subcellularLocation>
</comment>
<comment type="similarity">
    <text evidence="1">Belongs to the phosphoglycerate mutase family. Ais subfamily.</text>
</comment>
<reference key="1">
    <citation type="submission" date="2007-11" db="EMBL/GenBank/DDBJ databases">
        <authorList>
            <consortium name="The Salmonella enterica serovar Arizonae Genome Sequencing Project"/>
            <person name="McClelland M."/>
            <person name="Sanderson E.K."/>
            <person name="Porwollik S."/>
            <person name="Spieth J."/>
            <person name="Clifton W.S."/>
            <person name="Fulton R."/>
            <person name="Chunyan W."/>
            <person name="Wollam A."/>
            <person name="Shah N."/>
            <person name="Pepin K."/>
            <person name="Bhonagiri V."/>
            <person name="Nash W."/>
            <person name="Johnson M."/>
            <person name="Thiruvilangam P."/>
            <person name="Wilson R."/>
        </authorList>
    </citation>
    <scope>NUCLEOTIDE SEQUENCE [LARGE SCALE GENOMIC DNA]</scope>
    <source>
        <strain>ATCC BAA-731 / CDC346-86 / RSK2980</strain>
    </source>
</reference>
<evidence type="ECO:0000255" key="1">
    <source>
        <dbReference type="HAMAP-Rule" id="MF_01868"/>
    </source>
</evidence>
<dbReference type="EC" id="3.1.3.-" evidence="1"/>
<dbReference type="EMBL" id="CP000880">
    <property type="protein sequence ID" value="ABX20527.1"/>
    <property type="molecule type" value="Genomic_DNA"/>
</dbReference>
<dbReference type="SMR" id="A9MJC7"/>
<dbReference type="STRING" id="41514.SARI_00601"/>
<dbReference type="KEGG" id="ses:SARI_00601"/>
<dbReference type="HOGENOM" id="CLU_106705_1_0_6"/>
<dbReference type="UniPathway" id="UPA00451"/>
<dbReference type="Proteomes" id="UP000002084">
    <property type="component" value="Chromosome"/>
</dbReference>
<dbReference type="GO" id="GO:0042597">
    <property type="term" value="C:periplasmic space"/>
    <property type="evidence" value="ECO:0007669"/>
    <property type="project" value="UniProtKB-SubCell"/>
</dbReference>
<dbReference type="GO" id="GO:0016791">
    <property type="term" value="F:phosphatase activity"/>
    <property type="evidence" value="ECO:0007669"/>
    <property type="project" value="UniProtKB-UniRule"/>
</dbReference>
<dbReference type="GO" id="GO:0008653">
    <property type="term" value="P:lipopolysaccharide metabolic process"/>
    <property type="evidence" value="ECO:0007669"/>
    <property type="project" value="UniProtKB-UniRule"/>
</dbReference>
<dbReference type="CDD" id="cd07040">
    <property type="entry name" value="HP"/>
    <property type="match status" value="1"/>
</dbReference>
<dbReference type="Gene3D" id="3.40.50.1240">
    <property type="entry name" value="Phosphoglycerate mutase-like"/>
    <property type="match status" value="1"/>
</dbReference>
<dbReference type="HAMAP" id="MF_01868">
    <property type="entry name" value="Ais"/>
    <property type="match status" value="1"/>
</dbReference>
<dbReference type="InterPro" id="IPR029033">
    <property type="entry name" value="His_PPase_superfam"/>
</dbReference>
<dbReference type="InterPro" id="IPR011310">
    <property type="entry name" value="LipoPS_heptP_Pase"/>
</dbReference>
<dbReference type="NCBIfam" id="NF011945">
    <property type="entry name" value="PRK15416.1"/>
    <property type="match status" value="1"/>
</dbReference>
<dbReference type="PIRSF" id="PIRSF011416">
    <property type="entry name" value="Ais-TraG-AfrS"/>
    <property type="match status" value="1"/>
</dbReference>
<dbReference type="SUPFAM" id="SSF53254">
    <property type="entry name" value="Phosphoglycerate mutase-like"/>
    <property type="match status" value="1"/>
</dbReference>
<sequence length="201" mass="22086">MLAFILRFIKNKSYFALLAGAWVIIAGLTSQHAWSGNGLPQINGNTLAALAKQYPVVVLFRHAERCDRSDNTCLSDSSGITVNGAQNARSLGKDFNADIQNYNLYSSNTVRTIQSATWFSAGRSLTVDKKMMDCGSGIYASINTLLKKSQNKNVVIFTHNHCLTYIAKNKRGVKFEPDYLDALVMHAANGKLFLDGEFVPG</sequence>
<name>AIS_SALAR</name>
<protein>
    <recommendedName>
        <fullName evidence="1">Lipopolysaccharide core heptose(II)-phosphate phosphatase</fullName>
        <ecNumber evidence="1">3.1.3.-</ecNumber>
    </recommendedName>
</protein>
<accession>A9MJC7</accession>
<proteinExistence type="inferred from homology"/>
<gene>
    <name evidence="1" type="primary">ais</name>
    <name type="ordered locus">SARI_00601</name>
</gene>
<organism>
    <name type="scientific">Salmonella arizonae (strain ATCC BAA-731 / CDC346-86 / RSK2980)</name>
    <dbReference type="NCBI Taxonomy" id="41514"/>
    <lineage>
        <taxon>Bacteria</taxon>
        <taxon>Pseudomonadati</taxon>
        <taxon>Pseudomonadota</taxon>
        <taxon>Gammaproteobacteria</taxon>
        <taxon>Enterobacterales</taxon>
        <taxon>Enterobacteriaceae</taxon>
        <taxon>Salmonella</taxon>
    </lineage>
</organism>